<gene>
    <name evidence="1" type="primary">rpl14</name>
    <name type="ordered locus">OtCpg00370</name>
</gene>
<proteinExistence type="inferred from homology"/>
<comment type="function">
    <text evidence="1">Binds to 23S rRNA.</text>
</comment>
<comment type="subunit">
    <text evidence="1">Part of the 50S ribosomal subunit.</text>
</comment>
<comment type="subcellular location">
    <subcellularLocation>
        <location>Plastid</location>
        <location>Chloroplast</location>
    </subcellularLocation>
</comment>
<comment type="similarity">
    <text evidence="1">Belongs to the universal ribosomal protein uL14 family.</text>
</comment>
<geneLocation type="chloroplast"/>
<accession>Q0P3L5</accession>
<evidence type="ECO:0000255" key="1">
    <source>
        <dbReference type="HAMAP-Rule" id="MF_01367"/>
    </source>
</evidence>
<evidence type="ECO:0000305" key="2"/>
<reference key="1">
    <citation type="journal article" date="2007" name="Mol. Biol. Evol.">
        <title>The complete chloroplast and mitochondrial DNA sequence of Ostreococcus tauri: organelle genomes of the smallest eukaryote are examples of compaction.</title>
        <authorList>
            <person name="Robbens S."/>
            <person name="Derelle E."/>
            <person name="Ferraz C."/>
            <person name="Wuyts J."/>
            <person name="Moreau H."/>
            <person name="Van de Peer Y."/>
        </authorList>
    </citation>
    <scope>NUCLEOTIDE SEQUENCE [LARGE SCALE GENOMIC DNA]</scope>
    <source>
        <strain>OTTH0595</strain>
    </source>
</reference>
<sequence length="119" mass="13316">MIQPQTYLEVADNSGARKLMCIRVLNRKIGHIGDVIIAVVKEALPNMPIKKSEVVRAVIVRTAHTIQRDNGMSIRFDDNAAVIINKEGNPRGTRVFGPIARELRERDFMKIVSLAPEVL</sequence>
<dbReference type="EMBL" id="CR954199">
    <property type="protein sequence ID" value="CAL36362.1"/>
    <property type="molecule type" value="Genomic_DNA"/>
</dbReference>
<dbReference type="RefSeq" id="YP_717240.1">
    <property type="nucleotide sequence ID" value="NC_008289.1"/>
</dbReference>
<dbReference type="SMR" id="Q0P3L5"/>
<dbReference type="FunCoup" id="Q0P3L5">
    <property type="interactions" value="320"/>
</dbReference>
<dbReference type="STRING" id="70448.Q0P3L5"/>
<dbReference type="GeneID" id="4238789"/>
<dbReference type="KEGG" id="ota:OstapCp37"/>
<dbReference type="eggNOG" id="KOG0901">
    <property type="taxonomic scope" value="Eukaryota"/>
</dbReference>
<dbReference type="InParanoid" id="Q0P3L5"/>
<dbReference type="Proteomes" id="UP000009170">
    <property type="component" value="Chloroplast"/>
</dbReference>
<dbReference type="GO" id="GO:0009507">
    <property type="term" value="C:chloroplast"/>
    <property type="evidence" value="ECO:0007669"/>
    <property type="project" value="UniProtKB-SubCell"/>
</dbReference>
<dbReference type="GO" id="GO:0022625">
    <property type="term" value="C:cytosolic large ribosomal subunit"/>
    <property type="evidence" value="ECO:0007669"/>
    <property type="project" value="TreeGrafter"/>
</dbReference>
<dbReference type="GO" id="GO:0070180">
    <property type="term" value="F:large ribosomal subunit rRNA binding"/>
    <property type="evidence" value="ECO:0007669"/>
    <property type="project" value="TreeGrafter"/>
</dbReference>
<dbReference type="GO" id="GO:0003735">
    <property type="term" value="F:structural constituent of ribosome"/>
    <property type="evidence" value="ECO:0007669"/>
    <property type="project" value="InterPro"/>
</dbReference>
<dbReference type="GO" id="GO:0006412">
    <property type="term" value="P:translation"/>
    <property type="evidence" value="ECO:0007669"/>
    <property type="project" value="UniProtKB-UniRule"/>
</dbReference>
<dbReference type="CDD" id="cd00337">
    <property type="entry name" value="Ribosomal_uL14"/>
    <property type="match status" value="1"/>
</dbReference>
<dbReference type="FunFam" id="2.40.150.20:FF:000001">
    <property type="entry name" value="50S ribosomal protein L14"/>
    <property type="match status" value="1"/>
</dbReference>
<dbReference type="Gene3D" id="2.40.150.20">
    <property type="entry name" value="Ribosomal protein L14"/>
    <property type="match status" value="1"/>
</dbReference>
<dbReference type="HAMAP" id="MF_01367">
    <property type="entry name" value="Ribosomal_uL14"/>
    <property type="match status" value="1"/>
</dbReference>
<dbReference type="InterPro" id="IPR000218">
    <property type="entry name" value="Ribosomal_uL14"/>
</dbReference>
<dbReference type="InterPro" id="IPR005745">
    <property type="entry name" value="Ribosomal_uL14_bac-type"/>
</dbReference>
<dbReference type="InterPro" id="IPR019972">
    <property type="entry name" value="Ribosomal_uL14_CS"/>
</dbReference>
<dbReference type="InterPro" id="IPR036853">
    <property type="entry name" value="Ribosomal_uL14_sf"/>
</dbReference>
<dbReference type="NCBIfam" id="TIGR01067">
    <property type="entry name" value="rplN_bact"/>
    <property type="match status" value="1"/>
</dbReference>
<dbReference type="PANTHER" id="PTHR11761">
    <property type="entry name" value="50S/60S RIBOSOMAL PROTEIN L14/L23"/>
    <property type="match status" value="1"/>
</dbReference>
<dbReference type="PANTHER" id="PTHR11761:SF3">
    <property type="entry name" value="LARGE RIBOSOMAL SUBUNIT PROTEIN UL14M"/>
    <property type="match status" value="1"/>
</dbReference>
<dbReference type="Pfam" id="PF00238">
    <property type="entry name" value="Ribosomal_L14"/>
    <property type="match status" value="1"/>
</dbReference>
<dbReference type="SMART" id="SM01374">
    <property type="entry name" value="Ribosomal_L14"/>
    <property type="match status" value="1"/>
</dbReference>
<dbReference type="SUPFAM" id="SSF50193">
    <property type="entry name" value="Ribosomal protein L14"/>
    <property type="match status" value="1"/>
</dbReference>
<dbReference type="PROSITE" id="PS00049">
    <property type="entry name" value="RIBOSOMAL_L14"/>
    <property type="match status" value="1"/>
</dbReference>
<feature type="chain" id="PRO_0000276357" description="Large ribosomal subunit protein uL14c">
    <location>
        <begin position="1"/>
        <end position="119"/>
    </location>
</feature>
<protein>
    <recommendedName>
        <fullName evidence="1">Large ribosomal subunit protein uL14c</fullName>
    </recommendedName>
    <alternativeName>
        <fullName evidence="2">50S ribosomal protein L14, chloroplastic</fullName>
    </alternativeName>
</protein>
<name>RK14_OSTTA</name>
<organism>
    <name type="scientific">Ostreococcus tauri</name>
    <dbReference type="NCBI Taxonomy" id="70448"/>
    <lineage>
        <taxon>Eukaryota</taxon>
        <taxon>Viridiplantae</taxon>
        <taxon>Chlorophyta</taxon>
        <taxon>Mamiellophyceae</taxon>
        <taxon>Mamiellales</taxon>
        <taxon>Bathycoccaceae</taxon>
        <taxon>Ostreococcus</taxon>
    </lineage>
</organism>
<keyword id="KW-0150">Chloroplast</keyword>
<keyword id="KW-0934">Plastid</keyword>
<keyword id="KW-1185">Reference proteome</keyword>
<keyword id="KW-0687">Ribonucleoprotein</keyword>
<keyword id="KW-0689">Ribosomal protein</keyword>
<keyword id="KW-0694">RNA-binding</keyword>
<keyword id="KW-0699">rRNA-binding</keyword>